<organism>
    <name type="scientific">Actinobacillus pleuropneumoniae serotype 3 (strain JL03)</name>
    <dbReference type="NCBI Taxonomy" id="434271"/>
    <lineage>
        <taxon>Bacteria</taxon>
        <taxon>Pseudomonadati</taxon>
        <taxon>Pseudomonadota</taxon>
        <taxon>Gammaproteobacteria</taxon>
        <taxon>Pasteurellales</taxon>
        <taxon>Pasteurellaceae</taxon>
        <taxon>Actinobacillus</taxon>
    </lineage>
</organism>
<evidence type="ECO:0000255" key="1">
    <source>
        <dbReference type="HAMAP-Rule" id="MF_01540"/>
    </source>
</evidence>
<protein>
    <recommendedName>
        <fullName evidence="1">Sulfite reductase [NADPH] hemoprotein beta-component</fullName>
        <shortName evidence="1">SiR-HP</shortName>
        <shortName evidence="1">SiRHP</shortName>
        <ecNumber evidence="1">1.8.1.2</ecNumber>
    </recommendedName>
</protein>
<reference key="1">
    <citation type="journal article" date="2008" name="PLoS ONE">
        <title>Genome biology of Actinobacillus pleuropneumoniae JL03, an isolate of serotype 3 prevalent in China.</title>
        <authorList>
            <person name="Xu Z."/>
            <person name="Zhou Y."/>
            <person name="Li L."/>
            <person name="Zhou R."/>
            <person name="Xiao S."/>
            <person name="Wan Y."/>
            <person name="Zhang S."/>
            <person name="Wang K."/>
            <person name="Li W."/>
            <person name="Li L."/>
            <person name="Jin H."/>
            <person name="Kang M."/>
            <person name="Dalai B."/>
            <person name="Li T."/>
            <person name="Liu L."/>
            <person name="Cheng Y."/>
            <person name="Zhang L."/>
            <person name="Xu T."/>
            <person name="Zheng H."/>
            <person name="Pu S."/>
            <person name="Wang B."/>
            <person name="Gu W."/>
            <person name="Zhang X.L."/>
            <person name="Zhu G.-F."/>
            <person name="Wang S."/>
            <person name="Zhao G.-P."/>
            <person name="Chen H."/>
        </authorList>
    </citation>
    <scope>NUCLEOTIDE SEQUENCE [LARGE SCALE GENOMIC DNA]</scope>
    <source>
        <strain>JL03</strain>
    </source>
</reference>
<dbReference type="EC" id="1.8.1.2" evidence="1"/>
<dbReference type="EMBL" id="CP000687">
    <property type="protein sequence ID" value="ABY70431.1"/>
    <property type="molecule type" value="Genomic_DNA"/>
</dbReference>
<dbReference type="RefSeq" id="WP_012263411.1">
    <property type="nucleotide sequence ID" value="NC_010278.1"/>
</dbReference>
<dbReference type="SMR" id="B0BT17"/>
<dbReference type="KEGG" id="apj:APJL_1881"/>
<dbReference type="HOGENOM" id="CLU_001975_3_2_6"/>
<dbReference type="UniPathway" id="UPA00140">
    <property type="reaction ID" value="UER00207"/>
</dbReference>
<dbReference type="Proteomes" id="UP000008547">
    <property type="component" value="Chromosome"/>
</dbReference>
<dbReference type="GO" id="GO:0009337">
    <property type="term" value="C:sulfite reductase complex (NADPH)"/>
    <property type="evidence" value="ECO:0007669"/>
    <property type="project" value="InterPro"/>
</dbReference>
<dbReference type="GO" id="GO:0051539">
    <property type="term" value="F:4 iron, 4 sulfur cluster binding"/>
    <property type="evidence" value="ECO:0007669"/>
    <property type="project" value="UniProtKB-KW"/>
</dbReference>
<dbReference type="GO" id="GO:0020037">
    <property type="term" value="F:heme binding"/>
    <property type="evidence" value="ECO:0007669"/>
    <property type="project" value="InterPro"/>
</dbReference>
<dbReference type="GO" id="GO:0046872">
    <property type="term" value="F:metal ion binding"/>
    <property type="evidence" value="ECO:0007669"/>
    <property type="project" value="UniProtKB-KW"/>
</dbReference>
<dbReference type="GO" id="GO:0050661">
    <property type="term" value="F:NADP binding"/>
    <property type="evidence" value="ECO:0007669"/>
    <property type="project" value="InterPro"/>
</dbReference>
<dbReference type="GO" id="GO:0050311">
    <property type="term" value="F:sulfite reductase (ferredoxin) activity"/>
    <property type="evidence" value="ECO:0007669"/>
    <property type="project" value="TreeGrafter"/>
</dbReference>
<dbReference type="GO" id="GO:0004783">
    <property type="term" value="F:sulfite reductase (NADPH) activity"/>
    <property type="evidence" value="ECO:0007669"/>
    <property type="project" value="UniProtKB-UniRule"/>
</dbReference>
<dbReference type="GO" id="GO:0019344">
    <property type="term" value="P:cysteine biosynthetic process"/>
    <property type="evidence" value="ECO:0007669"/>
    <property type="project" value="UniProtKB-KW"/>
</dbReference>
<dbReference type="GO" id="GO:0070814">
    <property type="term" value="P:hydrogen sulfide biosynthetic process"/>
    <property type="evidence" value="ECO:0007669"/>
    <property type="project" value="UniProtKB-UniRule"/>
</dbReference>
<dbReference type="GO" id="GO:0000103">
    <property type="term" value="P:sulfate assimilation"/>
    <property type="evidence" value="ECO:0007669"/>
    <property type="project" value="UniProtKB-UniRule"/>
</dbReference>
<dbReference type="FunFam" id="3.30.413.10:FF:000003">
    <property type="entry name" value="Sulfite reductase [NADPH] hemoprotein beta-component"/>
    <property type="match status" value="1"/>
</dbReference>
<dbReference type="FunFam" id="3.30.413.10:FF:000004">
    <property type="entry name" value="Sulfite reductase [NADPH] hemoprotein beta-component"/>
    <property type="match status" value="1"/>
</dbReference>
<dbReference type="Gene3D" id="3.90.480.20">
    <property type="match status" value="1"/>
</dbReference>
<dbReference type="Gene3D" id="3.30.413.10">
    <property type="entry name" value="Sulfite Reductase Hemoprotein, domain 1"/>
    <property type="match status" value="2"/>
</dbReference>
<dbReference type="HAMAP" id="MF_01540">
    <property type="entry name" value="CysI"/>
    <property type="match status" value="1"/>
</dbReference>
<dbReference type="InterPro" id="IPR011786">
    <property type="entry name" value="CysI"/>
</dbReference>
<dbReference type="InterPro" id="IPR005117">
    <property type="entry name" value="NiRdtase/SiRdtase_haem-b_fer"/>
</dbReference>
<dbReference type="InterPro" id="IPR036136">
    <property type="entry name" value="Nit/Sulf_reduc_fer-like_dom_sf"/>
</dbReference>
<dbReference type="InterPro" id="IPR006067">
    <property type="entry name" value="NO2/SO3_Rdtase_4Fe4S_dom"/>
</dbReference>
<dbReference type="InterPro" id="IPR045169">
    <property type="entry name" value="NO2/SO3_Rdtase_4Fe4S_prot"/>
</dbReference>
<dbReference type="InterPro" id="IPR045854">
    <property type="entry name" value="NO2/SO3_Rdtase_4Fe4S_sf"/>
</dbReference>
<dbReference type="InterPro" id="IPR006066">
    <property type="entry name" value="NO2/SO3_Rdtase_FeS/sirohaem_BS"/>
</dbReference>
<dbReference type="NCBIfam" id="TIGR02041">
    <property type="entry name" value="CysI"/>
    <property type="match status" value="1"/>
</dbReference>
<dbReference type="NCBIfam" id="NF010029">
    <property type="entry name" value="PRK13504.1"/>
    <property type="match status" value="1"/>
</dbReference>
<dbReference type="PANTHER" id="PTHR11493:SF47">
    <property type="entry name" value="SULFITE REDUCTASE [NADPH] SUBUNIT BETA"/>
    <property type="match status" value="1"/>
</dbReference>
<dbReference type="PANTHER" id="PTHR11493">
    <property type="entry name" value="SULFITE REDUCTASE [NADPH] SUBUNIT BETA-RELATED"/>
    <property type="match status" value="1"/>
</dbReference>
<dbReference type="Pfam" id="PF01077">
    <property type="entry name" value="NIR_SIR"/>
    <property type="match status" value="1"/>
</dbReference>
<dbReference type="Pfam" id="PF03460">
    <property type="entry name" value="NIR_SIR_ferr"/>
    <property type="match status" value="2"/>
</dbReference>
<dbReference type="PRINTS" id="PR00397">
    <property type="entry name" value="SIROHAEM"/>
</dbReference>
<dbReference type="SUPFAM" id="SSF56014">
    <property type="entry name" value="Nitrite and sulphite reductase 4Fe-4S domain-like"/>
    <property type="match status" value="2"/>
</dbReference>
<dbReference type="SUPFAM" id="SSF55124">
    <property type="entry name" value="Nitrite/Sulfite reductase N-terminal domain-like"/>
    <property type="match status" value="2"/>
</dbReference>
<dbReference type="PROSITE" id="PS00365">
    <property type="entry name" value="NIR_SIR"/>
    <property type="match status" value="1"/>
</dbReference>
<gene>
    <name evidence="1" type="primary">cysI</name>
    <name type="ordered locus">APJL_1881</name>
</gene>
<accession>B0BT17</accession>
<feature type="chain" id="PRO_1000146640" description="Sulfite reductase [NADPH] hemoprotein beta-component">
    <location>
        <begin position="1"/>
        <end position="588"/>
    </location>
</feature>
<feature type="binding site" evidence="1">
    <location>
        <position position="442"/>
    </location>
    <ligand>
        <name>[4Fe-4S] cluster</name>
        <dbReference type="ChEBI" id="CHEBI:49883"/>
    </ligand>
</feature>
<feature type="binding site" evidence="1">
    <location>
        <position position="448"/>
    </location>
    <ligand>
        <name>[4Fe-4S] cluster</name>
        <dbReference type="ChEBI" id="CHEBI:49883"/>
    </ligand>
</feature>
<feature type="binding site" evidence="1">
    <location>
        <position position="487"/>
    </location>
    <ligand>
        <name>[4Fe-4S] cluster</name>
        <dbReference type="ChEBI" id="CHEBI:49883"/>
    </ligand>
</feature>
<feature type="binding site" evidence="1">
    <location>
        <position position="491"/>
    </location>
    <ligand>
        <name>[4Fe-4S] cluster</name>
        <dbReference type="ChEBI" id="CHEBI:49883"/>
    </ligand>
</feature>
<feature type="binding site" description="axial binding residue" evidence="1">
    <location>
        <position position="491"/>
    </location>
    <ligand>
        <name>siroheme</name>
        <dbReference type="ChEBI" id="CHEBI:60052"/>
    </ligand>
    <ligandPart>
        <name>Fe</name>
        <dbReference type="ChEBI" id="CHEBI:18248"/>
    </ligandPart>
</feature>
<sequence>MSDKKIKGLEWQEKPLSDNERLKTDSNFLRGTILDDLKDGLTGGFKGDNFQLIRFHGMYEQDDRDIRAERLEEKLEPLKFMLLRCRLPGGIIKPYQWIEIDKFAREHTRYQSIRLTNRQTFQYHGVPKGKLQPMHRLLHSIGLDSIATAADMNRNVLCTSNPIESELHQQAYEFAKKISEHLLPRSRGYLDVWVDGKKVESSDDLLKIEDEPILGKTYLPRKFKTAVAIPPLNDVDVYANDLNFIAIQDENGQLCGFNVLVGGGLSFEHGNTKTYPNVAYSLGFVPLEHTLAAAEGVVKTQRDFGNRSDRKNARVRYTVQNMTLDGFRAEVERCMNIKFEPTRPYEFTERGDRIGWVKGIDNNWHLTLFIESGRITDKPEKPLMTGVLELAKVHKGDFRITANQNLIVANVAEQDKAQIEAIARQYGLIQEISKLRENAMSCVSLPTCPLAMAEAERVLPDFISELDKVLSKHNVADESIITRITGCPNGCRRAMLAEIGLVGKAIGRYNLHIGGDRAGLRIPRLYKENITLQEIVNEIDQLVARWATERQTNEAFGDFVIRSNIIAPVVNAHIDFWDATKIIPTTII</sequence>
<keyword id="KW-0004">4Fe-4S</keyword>
<keyword id="KW-0028">Amino-acid biosynthesis</keyword>
<keyword id="KW-0198">Cysteine biosynthesis</keyword>
<keyword id="KW-0349">Heme</keyword>
<keyword id="KW-0408">Iron</keyword>
<keyword id="KW-0411">Iron-sulfur</keyword>
<keyword id="KW-0479">Metal-binding</keyword>
<keyword id="KW-0521">NADP</keyword>
<keyword id="KW-0560">Oxidoreductase</keyword>
<name>CYSI_ACTPJ</name>
<proteinExistence type="inferred from homology"/>
<comment type="function">
    <text evidence="1">Component of the sulfite reductase complex that catalyzes the 6-electron reduction of sulfite to sulfide. This is one of several activities required for the biosynthesis of L-cysteine from sulfate.</text>
</comment>
<comment type="catalytic activity">
    <reaction evidence="1">
        <text>hydrogen sulfide + 3 NADP(+) + 3 H2O = sulfite + 3 NADPH + 4 H(+)</text>
        <dbReference type="Rhea" id="RHEA:13801"/>
        <dbReference type="ChEBI" id="CHEBI:15377"/>
        <dbReference type="ChEBI" id="CHEBI:15378"/>
        <dbReference type="ChEBI" id="CHEBI:17359"/>
        <dbReference type="ChEBI" id="CHEBI:29919"/>
        <dbReference type="ChEBI" id="CHEBI:57783"/>
        <dbReference type="ChEBI" id="CHEBI:58349"/>
        <dbReference type="EC" id="1.8.1.2"/>
    </reaction>
</comment>
<comment type="cofactor">
    <cofactor evidence="1">
        <name>siroheme</name>
        <dbReference type="ChEBI" id="CHEBI:60052"/>
    </cofactor>
    <text evidence="1">Binds 1 siroheme per subunit.</text>
</comment>
<comment type="cofactor">
    <cofactor evidence="1">
        <name>[4Fe-4S] cluster</name>
        <dbReference type="ChEBI" id="CHEBI:49883"/>
    </cofactor>
    <text evidence="1">Binds 1 [4Fe-4S] cluster per subunit.</text>
</comment>
<comment type="pathway">
    <text evidence="1">Sulfur metabolism; hydrogen sulfide biosynthesis; hydrogen sulfide from sulfite (NADPH route): step 1/1.</text>
</comment>
<comment type="subunit">
    <text evidence="1">Alpha(8)-beta(8). The alpha component is a flavoprotein, the beta component is a hemoprotein.</text>
</comment>
<comment type="similarity">
    <text evidence="1">Belongs to the nitrite and sulfite reductase 4Fe-4S domain family.</text>
</comment>